<organism>
    <name type="scientific">Lacticaseibacillus paracasei (strain ATCC 334 / BCRC 17002 / CCUG 31169 / CIP 107868 / KCTC 3260 / NRRL B-441)</name>
    <name type="common">Lactobacillus paracasei</name>
    <dbReference type="NCBI Taxonomy" id="321967"/>
    <lineage>
        <taxon>Bacteria</taxon>
        <taxon>Bacillati</taxon>
        <taxon>Bacillota</taxon>
        <taxon>Bacilli</taxon>
        <taxon>Lactobacillales</taxon>
        <taxon>Lactobacillaceae</taxon>
        <taxon>Lacticaseibacillus</taxon>
    </lineage>
</organism>
<protein>
    <recommendedName>
        <fullName evidence="1">Elongation factor G</fullName>
        <shortName evidence="1">EF-G</shortName>
    </recommendedName>
</protein>
<feature type="chain" id="PRO_1000008836" description="Elongation factor G">
    <location>
        <begin position="1"/>
        <end position="700"/>
    </location>
</feature>
<feature type="domain" description="tr-type G">
    <location>
        <begin position="10"/>
        <end position="285"/>
    </location>
</feature>
<feature type="binding site" evidence="1">
    <location>
        <begin position="19"/>
        <end position="26"/>
    </location>
    <ligand>
        <name>GTP</name>
        <dbReference type="ChEBI" id="CHEBI:37565"/>
    </ligand>
</feature>
<feature type="binding site" evidence="1">
    <location>
        <begin position="83"/>
        <end position="87"/>
    </location>
    <ligand>
        <name>GTP</name>
        <dbReference type="ChEBI" id="CHEBI:37565"/>
    </ligand>
</feature>
<feature type="binding site" evidence="1">
    <location>
        <begin position="137"/>
        <end position="140"/>
    </location>
    <ligand>
        <name>GTP</name>
        <dbReference type="ChEBI" id="CHEBI:37565"/>
    </ligand>
</feature>
<evidence type="ECO:0000255" key="1">
    <source>
        <dbReference type="HAMAP-Rule" id="MF_00054"/>
    </source>
</evidence>
<dbReference type="EMBL" id="CP000423">
    <property type="protein sequence ID" value="ABJ71244.1"/>
    <property type="molecule type" value="Genomic_DNA"/>
</dbReference>
<dbReference type="RefSeq" id="WP_011674918.1">
    <property type="nucleotide sequence ID" value="NC_008526.1"/>
</dbReference>
<dbReference type="RefSeq" id="YP_807686.1">
    <property type="nucleotide sequence ID" value="NC_008526.1"/>
</dbReference>
<dbReference type="SMR" id="Q034X8"/>
<dbReference type="STRING" id="321967.LSEI_2508"/>
<dbReference type="PaxDb" id="321967-LSEI_2508"/>
<dbReference type="KEGG" id="lca:LSEI_2508"/>
<dbReference type="PATRIC" id="fig|321967.11.peg.2462"/>
<dbReference type="HOGENOM" id="CLU_002794_4_1_9"/>
<dbReference type="Proteomes" id="UP000001651">
    <property type="component" value="Chromosome"/>
</dbReference>
<dbReference type="GO" id="GO:0005737">
    <property type="term" value="C:cytoplasm"/>
    <property type="evidence" value="ECO:0007669"/>
    <property type="project" value="UniProtKB-SubCell"/>
</dbReference>
<dbReference type="GO" id="GO:0005525">
    <property type="term" value="F:GTP binding"/>
    <property type="evidence" value="ECO:0007669"/>
    <property type="project" value="UniProtKB-UniRule"/>
</dbReference>
<dbReference type="GO" id="GO:0003924">
    <property type="term" value="F:GTPase activity"/>
    <property type="evidence" value="ECO:0007669"/>
    <property type="project" value="InterPro"/>
</dbReference>
<dbReference type="GO" id="GO:0003746">
    <property type="term" value="F:translation elongation factor activity"/>
    <property type="evidence" value="ECO:0007669"/>
    <property type="project" value="UniProtKB-UniRule"/>
</dbReference>
<dbReference type="GO" id="GO:0032790">
    <property type="term" value="P:ribosome disassembly"/>
    <property type="evidence" value="ECO:0007669"/>
    <property type="project" value="TreeGrafter"/>
</dbReference>
<dbReference type="CDD" id="cd01886">
    <property type="entry name" value="EF-G"/>
    <property type="match status" value="1"/>
</dbReference>
<dbReference type="CDD" id="cd16262">
    <property type="entry name" value="EFG_III"/>
    <property type="match status" value="1"/>
</dbReference>
<dbReference type="CDD" id="cd01434">
    <property type="entry name" value="EFG_mtEFG1_IV"/>
    <property type="match status" value="1"/>
</dbReference>
<dbReference type="CDD" id="cd03713">
    <property type="entry name" value="EFG_mtEFG_C"/>
    <property type="match status" value="1"/>
</dbReference>
<dbReference type="CDD" id="cd04088">
    <property type="entry name" value="EFG_mtEFG_II"/>
    <property type="match status" value="1"/>
</dbReference>
<dbReference type="FunFam" id="2.40.30.10:FF:000006">
    <property type="entry name" value="Elongation factor G"/>
    <property type="match status" value="1"/>
</dbReference>
<dbReference type="FunFam" id="3.30.230.10:FF:000003">
    <property type="entry name" value="Elongation factor G"/>
    <property type="match status" value="1"/>
</dbReference>
<dbReference type="FunFam" id="3.30.70.240:FF:000001">
    <property type="entry name" value="Elongation factor G"/>
    <property type="match status" value="1"/>
</dbReference>
<dbReference type="FunFam" id="3.30.70.870:FF:000001">
    <property type="entry name" value="Elongation factor G"/>
    <property type="match status" value="1"/>
</dbReference>
<dbReference type="FunFam" id="3.40.50.300:FF:000029">
    <property type="entry name" value="Elongation factor G"/>
    <property type="match status" value="1"/>
</dbReference>
<dbReference type="Gene3D" id="3.30.230.10">
    <property type="match status" value="1"/>
</dbReference>
<dbReference type="Gene3D" id="3.30.70.240">
    <property type="match status" value="1"/>
</dbReference>
<dbReference type="Gene3D" id="3.30.70.870">
    <property type="entry name" value="Elongation Factor G (Translational Gtpase), domain 3"/>
    <property type="match status" value="1"/>
</dbReference>
<dbReference type="Gene3D" id="3.40.50.300">
    <property type="entry name" value="P-loop containing nucleotide triphosphate hydrolases"/>
    <property type="match status" value="1"/>
</dbReference>
<dbReference type="Gene3D" id="2.40.30.10">
    <property type="entry name" value="Translation factors"/>
    <property type="match status" value="1"/>
</dbReference>
<dbReference type="HAMAP" id="MF_00054_B">
    <property type="entry name" value="EF_G_EF_2_B"/>
    <property type="match status" value="1"/>
</dbReference>
<dbReference type="InterPro" id="IPR053905">
    <property type="entry name" value="EF-G-like_DII"/>
</dbReference>
<dbReference type="InterPro" id="IPR041095">
    <property type="entry name" value="EFG_II"/>
</dbReference>
<dbReference type="InterPro" id="IPR009022">
    <property type="entry name" value="EFG_III"/>
</dbReference>
<dbReference type="InterPro" id="IPR035647">
    <property type="entry name" value="EFG_III/V"/>
</dbReference>
<dbReference type="InterPro" id="IPR047872">
    <property type="entry name" value="EFG_IV"/>
</dbReference>
<dbReference type="InterPro" id="IPR035649">
    <property type="entry name" value="EFG_V"/>
</dbReference>
<dbReference type="InterPro" id="IPR000640">
    <property type="entry name" value="EFG_V-like"/>
</dbReference>
<dbReference type="InterPro" id="IPR031157">
    <property type="entry name" value="G_TR_CS"/>
</dbReference>
<dbReference type="InterPro" id="IPR027417">
    <property type="entry name" value="P-loop_NTPase"/>
</dbReference>
<dbReference type="InterPro" id="IPR020568">
    <property type="entry name" value="Ribosomal_Su5_D2-typ_SF"/>
</dbReference>
<dbReference type="InterPro" id="IPR014721">
    <property type="entry name" value="Ribsml_uS5_D2-typ_fold_subgr"/>
</dbReference>
<dbReference type="InterPro" id="IPR005225">
    <property type="entry name" value="Small_GTP-bd"/>
</dbReference>
<dbReference type="InterPro" id="IPR000795">
    <property type="entry name" value="T_Tr_GTP-bd_dom"/>
</dbReference>
<dbReference type="InterPro" id="IPR009000">
    <property type="entry name" value="Transl_B-barrel_sf"/>
</dbReference>
<dbReference type="InterPro" id="IPR004540">
    <property type="entry name" value="Transl_elong_EFG/EF2"/>
</dbReference>
<dbReference type="InterPro" id="IPR005517">
    <property type="entry name" value="Transl_elong_EFG/EF2_IV"/>
</dbReference>
<dbReference type="NCBIfam" id="TIGR00484">
    <property type="entry name" value="EF-G"/>
    <property type="match status" value="1"/>
</dbReference>
<dbReference type="NCBIfam" id="NF009379">
    <property type="entry name" value="PRK12740.1-3"/>
    <property type="match status" value="1"/>
</dbReference>
<dbReference type="NCBIfam" id="NF009381">
    <property type="entry name" value="PRK12740.1-5"/>
    <property type="match status" value="1"/>
</dbReference>
<dbReference type="NCBIfam" id="TIGR00231">
    <property type="entry name" value="small_GTP"/>
    <property type="match status" value="1"/>
</dbReference>
<dbReference type="PANTHER" id="PTHR43261:SF1">
    <property type="entry name" value="RIBOSOME-RELEASING FACTOR 2, MITOCHONDRIAL"/>
    <property type="match status" value="1"/>
</dbReference>
<dbReference type="PANTHER" id="PTHR43261">
    <property type="entry name" value="TRANSLATION ELONGATION FACTOR G-RELATED"/>
    <property type="match status" value="1"/>
</dbReference>
<dbReference type="Pfam" id="PF22042">
    <property type="entry name" value="EF-G_D2"/>
    <property type="match status" value="1"/>
</dbReference>
<dbReference type="Pfam" id="PF00679">
    <property type="entry name" value="EFG_C"/>
    <property type="match status" value="1"/>
</dbReference>
<dbReference type="Pfam" id="PF14492">
    <property type="entry name" value="EFG_III"/>
    <property type="match status" value="1"/>
</dbReference>
<dbReference type="Pfam" id="PF03764">
    <property type="entry name" value="EFG_IV"/>
    <property type="match status" value="1"/>
</dbReference>
<dbReference type="Pfam" id="PF00009">
    <property type="entry name" value="GTP_EFTU"/>
    <property type="match status" value="1"/>
</dbReference>
<dbReference type="PRINTS" id="PR00315">
    <property type="entry name" value="ELONGATNFCT"/>
</dbReference>
<dbReference type="SMART" id="SM00838">
    <property type="entry name" value="EFG_C"/>
    <property type="match status" value="1"/>
</dbReference>
<dbReference type="SMART" id="SM00889">
    <property type="entry name" value="EFG_IV"/>
    <property type="match status" value="1"/>
</dbReference>
<dbReference type="SUPFAM" id="SSF54980">
    <property type="entry name" value="EF-G C-terminal domain-like"/>
    <property type="match status" value="2"/>
</dbReference>
<dbReference type="SUPFAM" id="SSF52540">
    <property type="entry name" value="P-loop containing nucleoside triphosphate hydrolases"/>
    <property type="match status" value="1"/>
</dbReference>
<dbReference type="SUPFAM" id="SSF54211">
    <property type="entry name" value="Ribosomal protein S5 domain 2-like"/>
    <property type="match status" value="1"/>
</dbReference>
<dbReference type="SUPFAM" id="SSF50447">
    <property type="entry name" value="Translation proteins"/>
    <property type="match status" value="1"/>
</dbReference>
<dbReference type="PROSITE" id="PS00301">
    <property type="entry name" value="G_TR_1"/>
    <property type="match status" value="1"/>
</dbReference>
<dbReference type="PROSITE" id="PS51722">
    <property type="entry name" value="G_TR_2"/>
    <property type="match status" value="1"/>
</dbReference>
<sequence>MANKREFPLDRTRNIGIMAHIDAGKTTTTERILYYTGKIHKIGETHEGASQMDWMPQEQERGITITSAATTAFWKDHRVNIIDTPGHVDFTIEVERSLRVLDGAITVLDAQSGVEPQTENVWRQATTYGVPRLVFVNKMDKIGADFDYSMTTLHDRLQANAHAVQMPIGAEDKFEGVIDLIEMKADLYDEDELGTKWDTVDVPDDYKEAAQKAHNDLIEAVADVDDGIMDKYLEGEEISNAELKAAIRKATINLEFYPVLAGSAFKNKGVQMLLDAVIDYLPSPLDVRPYHATDPDTGDAVELTAGDDKPFAALAFKVATDPFVGRLTYIRVYSGTLEAGSYVLNATKDNRERVGRLLQMHSNHREEIPEVFSGDIAAAIGLKNTTTGDSLTDVDHPLILESLDVPDPVIQVSIEPDSKEDQDKLDVGLQKLSEEDPTFKAETSPETGETLIAGMGELHLDIMVDRLKREFKVAAKVGEPQVAYRETFTKETSAQGKFVRQSGGKGQYGDVWIEFSPNEEGKGFEFENAIVGGVVPREYIPAVEQGLKEAMANGVLAGYPLIDVKAKLYDGSYHEVDSSEAAFKVAASMALKNASKSAGAVILEPIMHVEVVAPEEYLGDVMGQITARRGRVEGMEARGNAQLVNSMVPLAEMFGYATTLRSATQGRGTFTMTFDHYEAVPKSIQAEIIKKNGGGVATKD</sequence>
<accession>Q034X8</accession>
<gene>
    <name evidence="1" type="primary">fusA</name>
    <name type="ordered locus">LSEI_2508</name>
</gene>
<proteinExistence type="inferred from homology"/>
<keyword id="KW-0963">Cytoplasm</keyword>
<keyword id="KW-0251">Elongation factor</keyword>
<keyword id="KW-0342">GTP-binding</keyword>
<keyword id="KW-0547">Nucleotide-binding</keyword>
<keyword id="KW-0648">Protein biosynthesis</keyword>
<keyword id="KW-1185">Reference proteome</keyword>
<name>EFG_LACP3</name>
<reference key="1">
    <citation type="journal article" date="2006" name="Proc. Natl. Acad. Sci. U.S.A.">
        <title>Comparative genomics of the lactic acid bacteria.</title>
        <authorList>
            <person name="Makarova K.S."/>
            <person name="Slesarev A."/>
            <person name="Wolf Y.I."/>
            <person name="Sorokin A."/>
            <person name="Mirkin B."/>
            <person name="Koonin E.V."/>
            <person name="Pavlov A."/>
            <person name="Pavlova N."/>
            <person name="Karamychev V."/>
            <person name="Polouchine N."/>
            <person name="Shakhova V."/>
            <person name="Grigoriev I."/>
            <person name="Lou Y."/>
            <person name="Rohksar D."/>
            <person name="Lucas S."/>
            <person name="Huang K."/>
            <person name="Goodstein D.M."/>
            <person name="Hawkins T."/>
            <person name="Plengvidhya V."/>
            <person name="Welker D."/>
            <person name="Hughes J."/>
            <person name="Goh Y."/>
            <person name="Benson A."/>
            <person name="Baldwin K."/>
            <person name="Lee J.-H."/>
            <person name="Diaz-Muniz I."/>
            <person name="Dosti B."/>
            <person name="Smeianov V."/>
            <person name="Wechter W."/>
            <person name="Barabote R."/>
            <person name="Lorca G."/>
            <person name="Altermann E."/>
            <person name="Barrangou R."/>
            <person name="Ganesan B."/>
            <person name="Xie Y."/>
            <person name="Rawsthorne H."/>
            <person name="Tamir D."/>
            <person name="Parker C."/>
            <person name="Breidt F."/>
            <person name="Broadbent J.R."/>
            <person name="Hutkins R."/>
            <person name="O'Sullivan D."/>
            <person name="Steele J."/>
            <person name="Unlu G."/>
            <person name="Saier M.H. Jr."/>
            <person name="Klaenhammer T."/>
            <person name="Richardson P."/>
            <person name="Kozyavkin S."/>
            <person name="Weimer B.C."/>
            <person name="Mills D.A."/>
        </authorList>
    </citation>
    <scope>NUCLEOTIDE SEQUENCE [LARGE SCALE GENOMIC DNA]</scope>
    <source>
        <strain>ATCC 334 / BCRC 17002 / CCUG 31169 / CIP 107868 / KCTC 3260 / NRRL B-441</strain>
    </source>
</reference>
<comment type="function">
    <text evidence="1">Catalyzes the GTP-dependent ribosomal translocation step during translation elongation. During this step, the ribosome changes from the pre-translocational (PRE) to the post-translocational (POST) state as the newly formed A-site-bound peptidyl-tRNA and P-site-bound deacylated tRNA move to the P and E sites, respectively. Catalyzes the coordinated movement of the two tRNA molecules, the mRNA and conformational changes in the ribosome.</text>
</comment>
<comment type="subcellular location">
    <subcellularLocation>
        <location evidence="1">Cytoplasm</location>
    </subcellularLocation>
</comment>
<comment type="similarity">
    <text evidence="1">Belongs to the TRAFAC class translation factor GTPase superfamily. Classic translation factor GTPase family. EF-G/EF-2 subfamily.</text>
</comment>